<accession>B1JQF7</accession>
<name>DAPD_YERPY</name>
<keyword id="KW-0012">Acyltransferase</keyword>
<keyword id="KW-0028">Amino-acid biosynthesis</keyword>
<keyword id="KW-0963">Cytoplasm</keyword>
<keyword id="KW-0220">Diaminopimelate biosynthesis</keyword>
<keyword id="KW-0457">Lysine biosynthesis</keyword>
<keyword id="KW-0677">Repeat</keyword>
<keyword id="KW-0808">Transferase</keyword>
<proteinExistence type="inferred from homology"/>
<comment type="catalytic activity">
    <reaction evidence="1">
        <text>(S)-2,3,4,5-tetrahydrodipicolinate + succinyl-CoA + H2O = (S)-2-succinylamino-6-oxoheptanedioate + CoA</text>
        <dbReference type="Rhea" id="RHEA:17325"/>
        <dbReference type="ChEBI" id="CHEBI:15377"/>
        <dbReference type="ChEBI" id="CHEBI:15685"/>
        <dbReference type="ChEBI" id="CHEBI:16845"/>
        <dbReference type="ChEBI" id="CHEBI:57287"/>
        <dbReference type="ChEBI" id="CHEBI:57292"/>
        <dbReference type="EC" id="2.3.1.117"/>
    </reaction>
</comment>
<comment type="pathway">
    <text evidence="1">Amino-acid biosynthesis; L-lysine biosynthesis via DAP pathway; LL-2,6-diaminopimelate from (S)-tetrahydrodipicolinate (succinylase route): step 1/3.</text>
</comment>
<comment type="subcellular location">
    <subcellularLocation>
        <location evidence="1">Cytoplasm</location>
    </subcellularLocation>
</comment>
<comment type="similarity">
    <text evidence="1">Belongs to the transferase hexapeptide repeat family.</text>
</comment>
<dbReference type="EC" id="2.3.1.117" evidence="1"/>
<dbReference type="EMBL" id="CP000950">
    <property type="protein sequence ID" value="ACA67364.1"/>
    <property type="molecule type" value="Genomic_DNA"/>
</dbReference>
<dbReference type="RefSeq" id="WP_002212128.1">
    <property type="nucleotide sequence ID" value="NZ_CP009792.1"/>
</dbReference>
<dbReference type="SMR" id="B1JQF7"/>
<dbReference type="GeneID" id="96662373"/>
<dbReference type="KEGG" id="ypy:YPK_1063"/>
<dbReference type="PATRIC" id="fig|502800.11.peg.1695"/>
<dbReference type="UniPathway" id="UPA00034">
    <property type="reaction ID" value="UER00019"/>
</dbReference>
<dbReference type="GO" id="GO:0005737">
    <property type="term" value="C:cytoplasm"/>
    <property type="evidence" value="ECO:0007669"/>
    <property type="project" value="UniProtKB-SubCell"/>
</dbReference>
<dbReference type="GO" id="GO:0008666">
    <property type="term" value="F:2,3,4,5-tetrahydropyridine-2,6-dicarboxylate N-succinyltransferase activity"/>
    <property type="evidence" value="ECO:0007669"/>
    <property type="project" value="UniProtKB-UniRule"/>
</dbReference>
<dbReference type="GO" id="GO:0016779">
    <property type="term" value="F:nucleotidyltransferase activity"/>
    <property type="evidence" value="ECO:0007669"/>
    <property type="project" value="TreeGrafter"/>
</dbReference>
<dbReference type="GO" id="GO:0019877">
    <property type="term" value="P:diaminopimelate biosynthetic process"/>
    <property type="evidence" value="ECO:0007669"/>
    <property type="project" value="UniProtKB-UniRule"/>
</dbReference>
<dbReference type="GO" id="GO:0009089">
    <property type="term" value="P:lysine biosynthetic process via diaminopimelate"/>
    <property type="evidence" value="ECO:0007669"/>
    <property type="project" value="UniProtKB-UniRule"/>
</dbReference>
<dbReference type="CDD" id="cd03350">
    <property type="entry name" value="LbH_THP_succinylT"/>
    <property type="match status" value="1"/>
</dbReference>
<dbReference type="FunFam" id="2.160.10.10:FF:000004">
    <property type="entry name" value="2,3,4,5-tetrahydropyridine-2,6-dicarboxylate N-succinyltransferase"/>
    <property type="match status" value="1"/>
</dbReference>
<dbReference type="Gene3D" id="2.160.10.10">
    <property type="entry name" value="Hexapeptide repeat proteins"/>
    <property type="match status" value="1"/>
</dbReference>
<dbReference type="Gene3D" id="1.10.166.10">
    <property type="entry name" value="Tetrahydrodipicolinate-N-succinyltransferase, N-terminal domain"/>
    <property type="match status" value="1"/>
</dbReference>
<dbReference type="HAMAP" id="MF_00811">
    <property type="entry name" value="DapD"/>
    <property type="match status" value="1"/>
</dbReference>
<dbReference type="InterPro" id="IPR005664">
    <property type="entry name" value="DapD_Trfase_Hexpep_rpt_fam"/>
</dbReference>
<dbReference type="InterPro" id="IPR001451">
    <property type="entry name" value="Hexapep"/>
</dbReference>
<dbReference type="InterPro" id="IPR018357">
    <property type="entry name" value="Hexapep_transf_CS"/>
</dbReference>
<dbReference type="InterPro" id="IPR023180">
    <property type="entry name" value="THP_succinylTrfase_dom1"/>
</dbReference>
<dbReference type="InterPro" id="IPR037133">
    <property type="entry name" value="THP_succinylTrfase_N_sf"/>
</dbReference>
<dbReference type="InterPro" id="IPR011004">
    <property type="entry name" value="Trimer_LpxA-like_sf"/>
</dbReference>
<dbReference type="NCBIfam" id="TIGR00965">
    <property type="entry name" value="dapD"/>
    <property type="match status" value="1"/>
</dbReference>
<dbReference type="NCBIfam" id="NF008808">
    <property type="entry name" value="PRK11830.1"/>
    <property type="match status" value="1"/>
</dbReference>
<dbReference type="PANTHER" id="PTHR19136:SF52">
    <property type="entry name" value="2,3,4,5-TETRAHYDROPYRIDINE-2,6-DICARBOXYLATE N-SUCCINYLTRANSFERASE"/>
    <property type="match status" value="1"/>
</dbReference>
<dbReference type="PANTHER" id="PTHR19136">
    <property type="entry name" value="MOLYBDENUM COFACTOR GUANYLYLTRANSFERASE"/>
    <property type="match status" value="1"/>
</dbReference>
<dbReference type="Pfam" id="PF14602">
    <property type="entry name" value="Hexapep_2"/>
    <property type="match status" value="1"/>
</dbReference>
<dbReference type="Pfam" id="PF14805">
    <property type="entry name" value="THDPS_N_2"/>
    <property type="match status" value="1"/>
</dbReference>
<dbReference type="SUPFAM" id="SSF51161">
    <property type="entry name" value="Trimeric LpxA-like enzymes"/>
    <property type="match status" value="1"/>
</dbReference>
<dbReference type="PROSITE" id="PS00101">
    <property type="entry name" value="HEXAPEP_TRANSFERASES"/>
    <property type="match status" value="1"/>
</dbReference>
<gene>
    <name evidence="1" type="primary">dapD</name>
    <name type="ordered locus">YPK_1063</name>
</gene>
<organism>
    <name type="scientific">Yersinia pseudotuberculosis serotype O:3 (strain YPIII)</name>
    <dbReference type="NCBI Taxonomy" id="502800"/>
    <lineage>
        <taxon>Bacteria</taxon>
        <taxon>Pseudomonadati</taxon>
        <taxon>Pseudomonadota</taxon>
        <taxon>Gammaproteobacteria</taxon>
        <taxon>Enterobacterales</taxon>
        <taxon>Yersiniaceae</taxon>
        <taxon>Yersinia</taxon>
    </lineage>
</organism>
<protein>
    <recommendedName>
        <fullName evidence="1">2,3,4,5-tetrahydropyridine-2,6-dicarboxylate N-succinyltransferase</fullName>
        <ecNumber evidence="1">2.3.1.117</ecNumber>
    </recommendedName>
    <alternativeName>
        <fullName evidence="1">Tetrahydrodipicolinate N-succinyltransferase</fullName>
        <shortName evidence="1">THP succinyltransferase</shortName>
        <shortName evidence="1">Tetrahydropicolinate succinylase</shortName>
    </alternativeName>
</protein>
<sequence>MQQLQNVIETAFERRADITPANVDTVTREAITHVIDLLDTGALRVAEKIDGQWVTHQWLKKAVLLSFRINDNQVMEGAETRYYDKVPMKFAGYDEARFQREGFRVVPPATVRKGAFIARNTVLMPSYVNIGAFVDEGTMVDTWATVGSCAQIGKNVHLSGGVGIGGVLEPLQANPTIIEDNCFVGARSEVVEGVIVEEGSVISMGVFIGQSTRIYDRETGEVHYGRVPAGSVVVSGNLPSKDGSYSLYCAVIVKKVDAKTRSKVGINELLRTID</sequence>
<reference key="1">
    <citation type="submission" date="2008-02" db="EMBL/GenBank/DDBJ databases">
        <title>Complete sequence of Yersinia pseudotuberculosis YPIII.</title>
        <authorList>
            <consortium name="US DOE Joint Genome Institute"/>
            <person name="Copeland A."/>
            <person name="Lucas S."/>
            <person name="Lapidus A."/>
            <person name="Glavina del Rio T."/>
            <person name="Dalin E."/>
            <person name="Tice H."/>
            <person name="Bruce D."/>
            <person name="Goodwin L."/>
            <person name="Pitluck S."/>
            <person name="Munk A.C."/>
            <person name="Brettin T."/>
            <person name="Detter J.C."/>
            <person name="Han C."/>
            <person name="Tapia R."/>
            <person name="Schmutz J."/>
            <person name="Larimer F."/>
            <person name="Land M."/>
            <person name="Hauser L."/>
            <person name="Challacombe J.F."/>
            <person name="Green L."/>
            <person name="Lindler L.E."/>
            <person name="Nikolich M.P."/>
            <person name="Richardson P."/>
        </authorList>
    </citation>
    <scope>NUCLEOTIDE SEQUENCE [LARGE SCALE GENOMIC DNA]</scope>
    <source>
        <strain>YPIII</strain>
    </source>
</reference>
<evidence type="ECO:0000255" key="1">
    <source>
        <dbReference type="HAMAP-Rule" id="MF_00811"/>
    </source>
</evidence>
<feature type="chain" id="PRO_1000134074" description="2,3,4,5-tetrahydropyridine-2,6-dicarboxylate N-succinyltransferase">
    <location>
        <begin position="1"/>
        <end position="274"/>
    </location>
</feature>